<sequence>MFSSESVTEGHPDKICDQISDAIVDALLTADPLSRVAAEVVVNTGMVILTGEITSQAHVNFTRLVRDKVAEIGYTDAKNGFSAESCAVLVAFDEQSPDIAQGVNLALESRTSQEDEFDLIGAGDQGLMFGFACDETPELMPLPISLAHRLSRQLAAVRKNGTLPYLRPDGKTQVTVAYEEGRPVGIHTLLISTQHTPTIGAITEEAAVQERIRADLWEAVVQPVFAELPIKPDGNTRFLTNPTGKFVIGGPQGDAGLTGRKIIVDTYGGYSRHGGGAFSGKDPTKVDRSAAYAARYVAKNIVAAGLAQKCEVQVSYAIGVARPINLLVETFGTGRIPDEALLRLVQRHFDLRPAAILAQFQLRELPRQRGGRFYQNVAVYGHFGQTHLDLPWERTDKAALLREEAFAGATAILG</sequence>
<feature type="chain" id="PRO_0000241050" description="S-adenosylmethionine synthase">
    <location>
        <begin position="1"/>
        <end position="414"/>
    </location>
</feature>
<feature type="region of interest" description="Flexible loop" evidence="1">
    <location>
        <begin position="95"/>
        <end position="105"/>
    </location>
</feature>
<feature type="binding site" description="in other chain" evidence="1">
    <location>
        <position position="11"/>
    </location>
    <ligand>
        <name>ATP</name>
        <dbReference type="ChEBI" id="CHEBI:30616"/>
        <note>ligand shared between two neighboring subunits</note>
    </ligand>
</feature>
<feature type="binding site" evidence="1">
    <location>
        <position position="13"/>
    </location>
    <ligand>
        <name>Mg(2+)</name>
        <dbReference type="ChEBI" id="CHEBI:18420"/>
    </ligand>
</feature>
<feature type="binding site" evidence="1">
    <location>
        <position position="39"/>
    </location>
    <ligand>
        <name>K(+)</name>
        <dbReference type="ChEBI" id="CHEBI:29103"/>
    </ligand>
</feature>
<feature type="binding site" description="in other chain" evidence="1">
    <location>
        <position position="52"/>
    </location>
    <ligand>
        <name>L-methionine</name>
        <dbReference type="ChEBI" id="CHEBI:57844"/>
        <note>ligand shared between two neighboring subunits</note>
    </ligand>
</feature>
<feature type="binding site" description="in other chain" evidence="1">
    <location>
        <position position="95"/>
    </location>
    <ligand>
        <name>L-methionine</name>
        <dbReference type="ChEBI" id="CHEBI:57844"/>
        <note>ligand shared between two neighboring subunits</note>
    </ligand>
</feature>
<feature type="binding site" description="in other chain" evidence="1">
    <location>
        <begin position="169"/>
        <end position="171"/>
    </location>
    <ligand>
        <name>ATP</name>
        <dbReference type="ChEBI" id="CHEBI:30616"/>
        <note>ligand shared between two neighboring subunits</note>
    </ligand>
</feature>
<feature type="binding site" description="in other chain" evidence="1">
    <location>
        <begin position="245"/>
        <end position="246"/>
    </location>
    <ligand>
        <name>ATP</name>
        <dbReference type="ChEBI" id="CHEBI:30616"/>
        <note>ligand shared between two neighboring subunits</note>
    </ligand>
</feature>
<feature type="binding site" evidence="1">
    <location>
        <position position="254"/>
    </location>
    <ligand>
        <name>ATP</name>
        <dbReference type="ChEBI" id="CHEBI:30616"/>
        <note>ligand shared between two neighboring subunits</note>
    </ligand>
</feature>
<feature type="binding site" evidence="1">
    <location>
        <position position="254"/>
    </location>
    <ligand>
        <name>L-methionine</name>
        <dbReference type="ChEBI" id="CHEBI:57844"/>
        <note>ligand shared between two neighboring subunits</note>
    </ligand>
</feature>
<feature type="binding site" description="in other chain" evidence="1">
    <location>
        <begin position="260"/>
        <end position="261"/>
    </location>
    <ligand>
        <name>ATP</name>
        <dbReference type="ChEBI" id="CHEBI:30616"/>
        <note>ligand shared between two neighboring subunits</note>
    </ligand>
</feature>
<feature type="binding site" evidence="1">
    <location>
        <position position="277"/>
    </location>
    <ligand>
        <name>ATP</name>
        <dbReference type="ChEBI" id="CHEBI:30616"/>
        <note>ligand shared between two neighboring subunits</note>
    </ligand>
</feature>
<feature type="binding site" evidence="1">
    <location>
        <position position="281"/>
    </location>
    <ligand>
        <name>ATP</name>
        <dbReference type="ChEBI" id="CHEBI:30616"/>
        <note>ligand shared between two neighboring subunits</note>
    </ligand>
</feature>
<feature type="binding site" description="in other chain" evidence="1">
    <location>
        <position position="285"/>
    </location>
    <ligand>
        <name>L-methionine</name>
        <dbReference type="ChEBI" id="CHEBI:57844"/>
        <note>ligand shared between two neighboring subunits</note>
    </ligand>
</feature>
<organism>
    <name type="scientific">Synechococcus sp. (strain JA-3-3Ab)</name>
    <name type="common">Cyanobacteria bacterium Yellowstone A-Prime</name>
    <dbReference type="NCBI Taxonomy" id="321327"/>
    <lineage>
        <taxon>Bacteria</taxon>
        <taxon>Bacillati</taxon>
        <taxon>Cyanobacteriota</taxon>
        <taxon>Cyanophyceae</taxon>
        <taxon>Synechococcales</taxon>
        <taxon>Synechococcaceae</taxon>
        <taxon>Synechococcus</taxon>
    </lineage>
</organism>
<name>METK_SYNJA</name>
<reference key="1">
    <citation type="journal article" date="2007" name="ISME J.">
        <title>Population level functional diversity in a microbial community revealed by comparative genomic and metagenomic analyses.</title>
        <authorList>
            <person name="Bhaya D."/>
            <person name="Grossman A.R."/>
            <person name="Steunou A.-S."/>
            <person name="Khuri N."/>
            <person name="Cohan F.M."/>
            <person name="Hamamura N."/>
            <person name="Melendrez M.C."/>
            <person name="Bateson M.M."/>
            <person name="Ward D.M."/>
            <person name="Heidelberg J.F."/>
        </authorList>
    </citation>
    <scope>NUCLEOTIDE SEQUENCE [LARGE SCALE GENOMIC DNA]</scope>
    <source>
        <strain>JA-3-3Ab</strain>
    </source>
</reference>
<keyword id="KW-0067">ATP-binding</keyword>
<keyword id="KW-0963">Cytoplasm</keyword>
<keyword id="KW-0460">Magnesium</keyword>
<keyword id="KW-0479">Metal-binding</keyword>
<keyword id="KW-0547">Nucleotide-binding</keyword>
<keyword id="KW-0554">One-carbon metabolism</keyword>
<keyword id="KW-0630">Potassium</keyword>
<keyword id="KW-0808">Transferase</keyword>
<proteinExistence type="inferred from homology"/>
<protein>
    <recommendedName>
        <fullName evidence="1">S-adenosylmethionine synthase</fullName>
        <shortName evidence="1">AdoMet synthase</shortName>
        <ecNumber evidence="1">2.5.1.6</ecNumber>
    </recommendedName>
    <alternativeName>
        <fullName evidence="1">MAT</fullName>
    </alternativeName>
    <alternativeName>
        <fullName evidence="1">Methionine adenosyltransferase</fullName>
    </alternativeName>
</protein>
<evidence type="ECO:0000255" key="1">
    <source>
        <dbReference type="HAMAP-Rule" id="MF_00086"/>
    </source>
</evidence>
<accession>Q2JV74</accession>
<dbReference type="EC" id="2.5.1.6" evidence="1"/>
<dbReference type="EMBL" id="CP000239">
    <property type="protein sequence ID" value="ABC99373.1"/>
    <property type="molecule type" value="Genomic_DNA"/>
</dbReference>
<dbReference type="SMR" id="Q2JV74"/>
<dbReference type="STRING" id="321327.CYA_1186"/>
<dbReference type="KEGG" id="cya:CYA_1186"/>
<dbReference type="eggNOG" id="COG0192">
    <property type="taxonomic scope" value="Bacteria"/>
</dbReference>
<dbReference type="HOGENOM" id="CLU_041802_1_1_3"/>
<dbReference type="UniPathway" id="UPA00315">
    <property type="reaction ID" value="UER00080"/>
</dbReference>
<dbReference type="Proteomes" id="UP000008818">
    <property type="component" value="Chromosome"/>
</dbReference>
<dbReference type="GO" id="GO:0005737">
    <property type="term" value="C:cytoplasm"/>
    <property type="evidence" value="ECO:0007669"/>
    <property type="project" value="UniProtKB-SubCell"/>
</dbReference>
<dbReference type="GO" id="GO:0005524">
    <property type="term" value="F:ATP binding"/>
    <property type="evidence" value="ECO:0007669"/>
    <property type="project" value="UniProtKB-UniRule"/>
</dbReference>
<dbReference type="GO" id="GO:0000287">
    <property type="term" value="F:magnesium ion binding"/>
    <property type="evidence" value="ECO:0007669"/>
    <property type="project" value="UniProtKB-UniRule"/>
</dbReference>
<dbReference type="GO" id="GO:0004478">
    <property type="term" value="F:methionine adenosyltransferase activity"/>
    <property type="evidence" value="ECO:0007669"/>
    <property type="project" value="UniProtKB-UniRule"/>
</dbReference>
<dbReference type="GO" id="GO:0006730">
    <property type="term" value="P:one-carbon metabolic process"/>
    <property type="evidence" value="ECO:0007669"/>
    <property type="project" value="UniProtKB-KW"/>
</dbReference>
<dbReference type="GO" id="GO:0006556">
    <property type="term" value="P:S-adenosylmethionine biosynthetic process"/>
    <property type="evidence" value="ECO:0007669"/>
    <property type="project" value="UniProtKB-UniRule"/>
</dbReference>
<dbReference type="CDD" id="cd18079">
    <property type="entry name" value="S-AdoMet_synt"/>
    <property type="match status" value="1"/>
</dbReference>
<dbReference type="FunFam" id="3.30.300.10:FF:000003">
    <property type="entry name" value="S-adenosylmethionine synthase"/>
    <property type="match status" value="1"/>
</dbReference>
<dbReference type="Gene3D" id="3.30.300.10">
    <property type="match status" value="3"/>
</dbReference>
<dbReference type="HAMAP" id="MF_00086">
    <property type="entry name" value="S_AdoMet_synth1"/>
    <property type="match status" value="1"/>
</dbReference>
<dbReference type="InterPro" id="IPR022631">
    <property type="entry name" value="ADOMET_SYNTHASE_CS"/>
</dbReference>
<dbReference type="InterPro" id="IPR022630">
    <property type="entry name" value="S-AdoMet_synt_C"/>
</dbReference>
<dbReference type="InterPro" id="IPR022629">
    <property type="entry name" value="S-AdoMet_synt_central"/>
</dbReference>
<dbReference type="InterPro" id="IPR022628">
    <property type="entry name" value="S-AdoMet_synt_N"/>
</dbReference>
<dbReference type="InterPro" id="IPR002133">
    <property type="entry name" value="S-AdoMet_synthetase"/>
</dbReference>
<dbReference type="InterPro" id="IPR022636">
    <property type="entry name" value="S-AdoMet_synthetase_sfam"/>
</dbReference>
<dbReference type="NCBIfam" id="TIGR01034">
    <property type="entry name" value="metK"/>
    <property type="match status" value="1"/>
</dbReference>
<dbReference type="PANTHER" id="PTHR11964">
    <property type="entry name" value="S-ADENOSYLMETHIONINE SYNTHETASE"/>
    <property type="match status" value="1"/>
</dbReference>
<dbReference type="Pfam" id="PF02773">
    <property type="entry name" value="S-AdoMet_synt_C"/>
    <property type="match status" value="1"/>
</dbReference>
<dbReference type="Pfam" id="PF02772">
    <property type="entry name" value="S-AdoMet_synt_M"/>
    <property type="match status" value="1"/>
</dbReference>
<dbReference type="Pfam" id="PF00438">
    <property type="entry name" value="S-AdoMet_synt_N"/>
    <property type="match status" value="1"/>
</dbReference>
<dbReference type="PIRSF" id="PIRSF000497">
    <property type="entry name" value="MAT"/>
    <property type="match status" value="1"/>
</dbReference>
<dbReference type="SUPFAM" id="SSF55973">
    <property type="entry name" value="S-adenosylmethionine synthetase"/>
    <property type="match status" value="3"/>
</dbReference>
<dbReference type="PROSITE" id="PS00376">
    <property type="entry name" value="ADOMET_SYNTHASE_1"/>
    <property type="match status" value="1"/>
</dbReference>
<dbReference type="PROSITE" id="PS00377">
    <property type="entry name" value="ADOMET_SYNTHASE_2"/>
    <property type="match status" value="1"/>
</dbReference>
<gene>
    <name evidence="1" type="primary">metK</name>
    <name type="ordered locus">CYA_1186</name>
</gene>
<comment type="function">
    <text evidence="1">Catalyzes the formation of S-adenosylmethionine (AdoMet) from methionine and ATP. The overall synthetic reaction is composed of two sequential steps, AdoMet formation and the subsequent tripolyphosphate hydrolysis which occurs prior to release of AdoMet from the enzyme.</text>
</comment>
<comment type="catalytic activity">
    <reaction evidence="1">
        <text>L-methionine + ATP + H2O = S-adenosyl-L-methionine + phosphate + diphosphate</text>
        <dbReference type="Rhea" id="RHEA:21080"/>
        <dbReference type="ChEBI" id="CHEBI:15377"/>
        <dbReference type="ChEBI" id="CHEBI:30616"/>
        <dbReference type="ChEBI" id="CHEBI:33019"/>
        <dbReference type="ChEBI" id="CHEBI:43474"/>
        <dbReference type="ChEBI" id="CHEBI:57844"/>
        <dbReference type="ChEBI" id="CHEBI:59789"/>
        <dbReference type="EC" id="2.5.1.6"/>
    </reaction>
</comment>
<comment type="cofactor">
    <cofactor evidence="1">
        <name>Mg(2+)</name>
        <dbReference type="ChEBI" id="CHEBI:18420"/>
    </cofactor>
    <text evidence="1">Binds 2 divalent ions per subunit.</text>
</comment>
<comment type="cofactor">
    <cofactor evidence="1">
        <name>K(+)</name>
        <dbReference type="ChEBI" id="CHEBI:29103"/>
    </cofactor>
    <text evidence="1">Binds 1 potassium ion per subunit.</text>
</comment>
<comment type="pathway">
    <text evidence="1">Amino-acid biosynthesis; S-adenosyl-L-methionine biosynthesis; S-adenosyl-L-methionine from L-methionine: step 1/1.</text>
</comment>
<comment type="subunit">
    <text evidence="1">Homotetramer; dimer of dimers.</text>
</comment>
<comment type="subcellular location">
    <subcellularLocation>
        <location evidence="1">Cytoplasm</location>
    </subcellularLocation>
</comment>
<comment type="similarity">
    <text evidence="1">Belongs to the AdoMet synthase family.</text>
</comment>